<protein>
    <recommendedName>
        <fullName evidence="1">3-hydroxyacyl-[acyl-carrier-protein] dehydratase FabZ</fullName>
        <ecNumber evidence="1">4.2.1.59</ecNumber>
    </recommendedName>
    <alternativeName>
        <fullName evidence="1">(3R)-hydroxymyristoyl-[acyl-carrier-protein] dehydratase</fullName>
        <shortName evidence="1">(3R)-hydroxymyristoyl-ACP dehydrase</shortName>
    </alternativeName>
    <alternativeName>
        <fullName evidence="1">Beta-hydroxyacyl-ACP dehydratase</fullName>
    </alternativeName>
</protein>
<organism>
    <name type="scientific">Staphylococcus aureus (strain MSSA476)</name>
    <dbReference type="NCBI Taxonomy" id="282459"/>
    <lineage>
        <taxon>Bacteria</taxon>
        <taxon>Bacillati</taxon>
        <taxon>Bacillota</taxon>
        <taxon>Bacilli</taxon>
        <taxon>Bacillales</taxon>
        <taxon>Staphylococcaceae</taxon>
        <taxon>Staphylococcus</taxon>
    </lineage>
</organism>
<gene>
    <name evidence="1" type="primary">fabZ</name>
    <name type="ordered locus">SAS2002</name>
</gene>
<keyword id="KW-0963">Cytoplasm</keyword>
<keyword id="KW-0441">Lipid A biosynthesis</keyword>
<keyword id="KW-0444">Lipid biosynthesis</keyword>
<keyword id="KW-0443">Lipid metabolism</keyword>
<keyword id="KW-0456">Lyase</keyword>
<sequence length="146" mass="16082">METIFDYNQIKQIIPHRQPFLLIDKVVEYEEGQRCVAIKQVSGNEPFFQGHFPEYAVMPGVLITEALAQTGAVAILNSEENKGKIALFAGIDKCRFKRQVVPGDTLTLEVEITKIKGPIGKGNAKATVDGQLACSCELTFAIQDVK</sequence>
<dbReference type="EC" id="4.2.1.59" evidence="1"/>
<dbReference type="EMBL" id="BX571857">
    <property type="protein sequence ID" value="CAG43810.1"/>
    <property type="molecule type" value="Genomic_DNA"/>
</dbReference>
<dbReference type="RefSeq" id="WP_000447678.1">
    <property type="nucleotide sequence ID" value="NC_002953.3"/>
</dbReference>
<dbReference type="SMR" id="Q6G7L1"/>
<dbReference type="KEGG" id="sas:SAS2002"/>
<dbReference type="HOGENOM" id="CLU_078912_3_0_9"/>
<dbReference type="GO" id="GO:0005737">
    <property type="term" value="C:cytoplasm"/>
    <property type="evidence" value="ECO:0007669"/>
    <property type="project" value="UniProtKB-SubCell"/>
</dbReference>
<dbReference type="GO" id="GO:0016020">
    <property type="term" value="C:membrane"/>
    <property type="evidence" value="ECO:0007669"/>
    <property type="project" value="GOC"/>
</dbReference>
<dbReference type="GO" id="GO:0019171">
    <property type="term" value="F:(3R)-hydroxyacyl-[acyl-carrier-protein] dehydratase activity"/>
    <property type="evidence" value="ECO:0007669"/>
    <property type="project" value="UniProtKB-EC"/>
</dbReference>
<dbReference type="GO" id="GO:0006633">
    <property type="term" value="P:fatty acid biosynthetic process"/>
    <property type="evidence" value="ECO:0007669"/>
    <property type="project" value="UniProtKB-UniRule"/>
</dbReference>
<dbReference type="GO" id="GO:0009245">
    <property type="term" value="P:lipid A biosynthetic process"/>
    <property type="evidence" value="ECO:0007669"/>
    <property type="project" value="UniProtKB-UniRule"/>
</dbReference>
<dbReference type="CDD" id="cd01288">
    <property type="entry name" value="FabZ"/>
    <property type="match status" value="1"/>
</dbReference>
<dbReference type="FunFam" id="3.10.129.10:FF:000001">
    <property type="entry name" value="3-hydroxyacyl-[acyl-carrier-protein] dehydratase FabZ"/>
    <property type="match status" value="1"/>
</dbReference>
<dbReference type="Gene3D" id="3.10.129.10">
    <property type="entry name" value="Hotdog Thioesterase"/>
    <property type="match status" value="1"/>
</dbReference>
<dbReference type="HAMAP" id="MF_00406">
    <property type="entry name" value="FabZ"/>
    <property type="match status" value="1"/>
</dbReference>
<dbReference type="InterPro" id="IPR013114">
    <property type="entry name" value="FabA_FabZ"/>
</dbReference>
<dbReference type="InterPro" id="IPR010084">
    <property type="entry name" value="FabZ"/>
</dbReference>
<dbReference type="InterPro" id="IPR029069">
    <property type="entry name" value="HotDog_dom_sf"/>
</dbReference>
<dbReference type="NCBIfam" id="TIGR01750">
    <property type="entry name" value="fabZ"/>
    <property type="match status" value="1"/>
</dbReference>
<dbReference type="NCBIfam" id="NF000582">
    <property type="entry name" value="PRK00006.1"/>
    <property type="match status" value="1"/>
</dbReference>
<dbReference type="PANTHER" id="PTHR30272">
    <property type="entry name" value="3-HYDROXYACYL-[ACYL-CARRIER-PROTEIN] DEHYDRATASE"/>
    <property type="match status" value="1"/>
</dbReference>
<dbReference type="PANTHER" id="PTHR30272:SF1">
    <property type="entry name" value="3-HYDROXYACYL-[ACYL-CARRIER-PROTEIN] DEHYDRATASE"/>
    <property type="match status" value="1"/>
</dbReference>
<dbReference type="Pfam" id="PF07977">
    <property type="entry name" value="FabA"/>
    <property type="match status" value="1"/>
</dbReference>
<dbReference type="SUPFAM" id="SSF54637">
    <property type="entry name" value="Thioesterase/thiol ester dehydrase-isomerase"/>
    <property type="match status" value="1"/>
</dbReference>
<accession>Q6G7L1</accession>
<reference key="1">
    <citation type="journal article" date="2004" name="Proc. Natl. Acad. Sci. U.S.A.">
        <title>Complete genomes of two clinical Staphylococcus aureus strains: evidence for the rapid evolution of virulence and drug resistance.</title>
        <authorList>
            <person name="Holden M.T.G."/>
            <person name="Feil E.J."/>
            <person name="Lindsay J.A."/>
            <person name="Peacock S.J."/>
            <person name="Day N.P.J."/>
            <person name="Enright M.C."/>
            <person name="Foster T.J."/>
            <person name="Moore C.E."/>
            <person name="Hurst L."/>
            <person name="Atkin R."/>
            <person name="Barron A."/>
            <person name="Bason N."/>
            <person name="Bentley S.D."/>
            <person name="Chillingworth C."/>
            <person name="Chillingworth T."/>
            <person name="Churcher C."/>
            <person name="Clark L."/>
            <person name="Corton C."/>
            <person name="Cronin A."/>
            <person name="Doggett J."/>
            <person name="Dowd L."/>
            <person name="Feltwell T."/>
            <person name="Hance Z."/>
            <person name="Harris B."/>
            <person name="Hauser H."/>
            <person name="Holroyd S."/>
            <person name="Jagels K."/>
            <person name="James K.D."/>
            <person name="Lennard N."/>
            <person name="Line A."/>
            <person name="Mayes R."/>
            <person name="Moule S."/>
            <person name="Mungall K."/>
            <person name="Ormond D."/>
            <person name="Quail M.A."/>
            <person name="Rabbinowitsch E."/>
            <person name="Rutherford K.M."/>
            <person name="Sanders M."/>
            <person name="Sharp S."/>
            <person name="Simmonds M."/>
            <person name="Stevens K."/>
            <person name="Whitehead S."/>
            <person name="Barrell B.G."/>
            <person name="Spratt B.G."/>
            <person name="Parkhill J."/>
        </authorList>
    </citation>
    <scope>NUCLEOTIDE SEQUENCE [LARGE SCALE GENOMIC DNA]</scope>
    <source>
        <strain>MSSA476</strain>
    </source>
</reference>
<name>FABZ_STAAS</name>
<comment type="function">
    <text evidence="1">Involved in unsaturated fatty acids biosynthesis. Catalyzes the dehydration of short chain beta-hydroxyacyl-ACPs and long chain saturated and unsaturated beta-hydroxyacyl-ACPs.</text>
</comment>
<comment type="catalytic activity">
    <reaction evidence="1">
        <text>a (3R)-hydroxyacyl-[ACP] = a (2E)-enoyl-[ACP] + H2O</text>
        <dbReference type="Rhea" id="RHEA:13097"/>
        <dbReference type="Rhea" id="RHEA-COMP:9925"/>
        <dbReference type="Rhea" id="RHEA-COMP:9945"/>
        <dbReference type="ChEBI" id="CHEBI:15377"/>
        <dbReference type="ChEBI" id="CHEBI:78784"/>
        <dbReference type="ChEBI" id="CHEBI:78827"/>
        <dbReference type="EC" id="4.2.1.59"/>
    </reaction>
</comment>
<comment type="subcellular location">
    <subcellularLocation>
        <location evidence="1">Cytoplasm</location>
    </subcellularLocation>
</comment>
<comment type="similarity">
    <text evidence="1">Belongs to the thioester dehydratase family. FabZ subfamily.</text>
</comment>
<evidence type="ECO:0000255" key="1">
    <source>
        <dbReference type="HAMAP-Rule" id="MF_00406"/>
    </source>
</evidence>
<feature type="chain" id="PRO_0000091734" description="3-hydroxyacyl-[acyl-carrier-protein] dehydratase FabZ">
    <location>
        <begin position="1"/>
        <end position="146"/>
    </location>
</feature>
<feature type="active site" evidence="1">
    <location>
        <position position="51"/>
    </location>
</feature>
<proteinExistence type="inferred from homology"/>